<accession>Q0AHJ0</accession>
<keyword id="KW-0997">Cell inner membrane</keyword>
<keyword id="KW-1003">Cell membrane</keyword>
<keyword id="KW-0472">Membrane</keyword>
<keyword id="KW-0520">NAD</keyword>
<keyword id="KW-0874">Quinone</keyword>
<keyword id="KW-1278">Translocase</keyword>
<keyword id="KW-0812">Transmembrane</keyword>
<keyword id="KW-1133">Transmembrane helix</keyword>
<keyword id="KW-0813">Transport</keyword>
<keyword id="KW-0830">Ubiquinone</keyword>
<proteinExistence type="inferred from homology"/>
<organism>
    <name type="scientific">Nitrosomonas eutropha (strain DSM 101675 / C91 / Nm57)</name>
    <dbReference type="NCBI Taxonomy" id="335283"/>
    <lineage>
        <taxon>Bacteria</taxon>
        <taxon>Pseudomonadati</taxon>
        <taxon>Pseudomonadota</taxon>
        <taxon>Betaproteobacteria</taxon>
        <taxon>Nitrosomonadales</taxon>
        <taxon>Nitrosomonadaceae</taxon>
        <taxon>Nitrosomonas</taxon>
    </lineage>
</organism>
<sequence>MVSLSHYLVLGAVLFAIGVVGIFLNRKNVIILLMSIELMLLAVNINFVAFSYYLQDIAGQIFVFFILTVAAAEAAIGLAILVALFRNIRTINVDDLDRLKG</sequence>
<gene>
    <name evidence="1" type="primary">nuoK</name>
    <name type="ordered locus">Neut_0932</name>
</gene>
<reference key="1">
    <citation type="journal article" date="2007" name="Environ. Microbiol.">
        <title>Whole-genome analysis of the ammonia-oxidizing bacterium, Nitrosomonas eutropha C91: implications for niche adaptation.</title>
        <authorList>
            <person name="Stein L.Y."/>
            <person name="Arp D.J."/>
            <person name="Berube P.M."/>
            <person name="Chain P.S."/>
            <person name="Hauser L."/>
            <person name="Jetten M.S."/>
            <person name="Klotz M.G."/>
            <person name="Larimer F.W."/>
            <person name="Norton J.M."/>
            <person name="Op den Camp H.J.M."/>
            <person name="Shin M."/>
            <person name="Wei X."/>
        </authorList>
    </citation>
    <scope>NUCLEOTIDE SEQUENCE [LARGE SCALE GENOMIC DNA]</scope>
    <source>
        <strain>DSM 101675 / C91 / Nm57</strain>
    </source>
</reference>
<evidence type="ECO:0000255" key="1">
    <source>
        <dbReference type="HAMAP-Rule" id="MF_01456"/>
    </source>
</evidence>
<comment type="function">
    <text evidence="1">NDH-1 shuttles electrons from NADH, via FMN and iron-sulfur (Fe-S) centers, to quinones in the respiratory chain. The immediate electron acceptor for the enzyme in this species is believed to be ubiquinone. Couples the redox reaction to proton translocation (for every two electrons transferred, four hydrogen ions are translocated across the cytoplasmic membrane), and thus conserves the redox energy in a proton gradient.</text>
</comment>
<comment type="catalytic activity">
    <reaction evidence="1">
        <text>a quinone + NADH + 5 H(+)(in) = a quinol + NAD(+) + 4 H(+)(out)</text>
        <dbReference type="Rhea" id="RHEA:57888"/>
        <dbReference type="ChEBI" id="CHEBI:15378"/>
        <dbReference type="ChEBI" id="CHEBI:24646"/>
        <dbReference type="ChEBI" id="CHEBI:57540"/>
        <dbReference type="ChEBI" id="CHEBI:57945"/>
        <dbReference type="ChEBI" id="CHEBI:132124"/>
    </reaction>
</comment>
<comment type="subunit">
    <text evidence="1">NDH-1 is composed of 14 different subunits. Subunits NuoA, H, J, K, L, M, N constitute the membrane sector of the complex.</text>
</comment>
<comment type="subcellular location">
    <subcellularLocation>
        <location evidence="1">Cell inner membrane</location>
        <topology evidence="1">Multi-pass membrane protein</topology>
    </subcellularLocation>
</comment>
<comment type="similarity">
    <text evidence="1">Belongs to the complex I subunit 4L family.</text>
</comment>
<protein>
    <recommendedName>
        <fullName evidence="1">NADH-quinone oxidoreductase subunit K</fullName>
        <ecNumber evidence="1">7.1.1.-</ecNumber>
    </recommendedName>
    <alternativeName>
        <fullName evidence="1">NADH dehydrogenase I subunit K</fullName>
    </alternativeName>
    <alternativeName>
        <fullName evidence="1">NDH-1 subunit K</fullName>
    </alternativeName>
</protein>
<name>NUOK_NITEC</name>
<feature type="chain" id="PRO_0000390148" description="NADH-quinone oxidoreductase subunit K">
    <location>
        <begin position="1"/>
        <end position="101"/>
    </location>
</feature>
<feature type="transmembrane region" description="Helical" evidence="1">
    <location>
        <begin position="4"/>
        <end position="24"/>
    </location>
</feature>
<feature type="transmembrane region" description="Helical" evidence="1">
    <location>
        <begin position="30"/>
        <end position="50"/>
    </location>
</feature>
<feature type="transmembrane region" description="Helical" evidence="1">
    <location>
        <begin position="61"/>
        <end position="81"/>
    </location>
</feature>
<dbReference type="EC" id="7.1.1.-" evidence="1"/>
<dbReference type="EMBL" id="CP000450">
    <property type="protein sequence ID" value="ABI59192.1"/>
    <property type="molecule type" value="Genomic_DNA"/>
</dbReference>
<dbReference type="RefSeq" id="WP_011634016.1">
    <property type="nucleotide sequence ID" value="NC_008344.1"/>
</dbReference>
<dbReference type="SMR" id="Q0AHJ0"/>
<dbReference type="STRING" id="335283.Neut_0932"/>
<dbReference type="KEGG" id="net:Neut_0932"/>
<dbReference type="eggNOG" id="COG0713">
    <property type="taxonomic scope" value="Bacteria"/>
</dbReference>
<dbReference type="HOGENOM" id="CLU_144724_2_0_4"/>
<dbReference type="Proteomes" id="UP000001966">
    <property type="component" value="Chromosome"/>
</dbReference>
<dbReference type="GO" id="GO:0030964">
    <property type="term" value="C:NADH dehydrogenase complex"/>
    <property type="evidence" value="ECO:0007669"/>
    <property type="project" value="TreeGrafter"/>
</dbReference>
<dbReference type="GO" id="GO:0005886">
    <property type="term" value="C:plasma membrane"/>
    <property type="evidence" value="ECO:0007669"/>
    <property type="project" value="UniProtKB-SubCell"/>
</dbReference>
<dbReference type="GO" id="GO:0050136">
    <property type="term" value="F:NADH:ubiquinone reductase (non-electrogenic) activity"/>
    <property type="evidence" value="ECO:0007669"/>
    <property type="project" value="UniProtKB-UniRule"/>
</dbReference>
<dbReference type="GO" id="GO:0048038">
    <property type="term" value="F:quinone binding"/>
    <property type="evidence" value="ECO:0007669"/>
    <property type="project" value="UniProtKB-KW"/>
</dbReference>
<dbReference type="GO" id="GO:0042773">
    <property type="term" value="P:ATP synthesis coupled electron transport"/>
    <property type="evidence" value="ECO:0007669"/>
    <property type="project" value="InterPro"/>
</dbReference>
<dbReference type="FunFam" id="1.10.287.3510:FF:000001">
    <property type="entry name" value="NADH-quinone oxidoreductase subunit K"/>
    <property type="match status" value="1"/>
</dbReference>
<dbReference type="Gene3D" id="1.10.287.3510">
    <property type="match status" value="1"/>
</dbReference>
<dbReference type="HAMAP" id="MF_01456">
    <property type="entry name" value="NDH1_NuoK"/>
    <property type="match status" value="1"/>
</dbReference>
<dbReference type="InterPro" id="IPR001133">
    <property type="entry name" value="NADH_UbQ_OxRdtase_chain4L/K"/>
</dbReference>
<dbReference type="InterPro" id="IPR039428">
    <property type="entry name" value="NUOK/Mnh_C1-like"/>
</dbReference>
<dbReference type="NCBIfam" id="NF004320">
    <property type="entry name" value="PRK05715.1-2"/>
    <property type="match status" value="1"/>
</dbReference>
<dbReference type="NCBIfam" id="NF004321">
    <property type="entry name" value="PRK05715.1-3"/>
    <property type="match status" value="1"/>
</dbReference>
<dbReference type="NCBIfam" id="NF004323">
    <property type="entry name" value="PRK05715.1-5"/>
    <property type="match status" value="1"/>
</dbReference>
<dbReference type="PANTHER" id="PTHR11434:SF21">
    <property type="entry name" value="NADH DEHYDROGENASE SUBUNIT 4L-RELATED"/>
    <property type="match status" value="1"/>
</dbReference>
<dbReference type="PANTHER" id="PTHR11434">
    <property type="entry name" value="NADH-UBIQUINONE OXIDOREDUCTASE SUBUNIT ND4L"/>
    <property type="match status" value="1"/>
</dbReference>
<dbReference type="Pfam" id="PF00420">
    <property type="entry name" value="Oxidored_q2"/>
    <property type="match status" value="1"/>
</dbReference>